<keyword id="KW-1185">Reference proteome</keyword>
<dbReference type="EMBL" id="U68703">
    <property type="protein sequence ID" value="AAB47944.1"/>
    <property type="molecule type" value="Genomic_DNA"/>
</dbReference>
<dbReference type="EMBL" id="U00096">
    <property type="protein sequence ID" value="AAC74738.1"/>
    <property type="molecule type" value="Genomic_DNA"/>
</dbReference>
<dbReference type="EMBL" id="AP009048">
    <property type="protein sequence ID" value="BAE76496.1"/>
    <property type="molecule type" value="Genomic_DNA"/>
</dbReference>
<dbReference type="PIR" id="D64924">
    <property type="entry name" value="D64924"/>
</dbReference>
<dbReference type="RefSeq" id="NP_416183.1">
    <property type="nucleotide sequence ID" value="NC_000913.3"/>
</dbReference>
<dbReference type="RefSeq" id="WP_000716950.1">
    <property type="nucleotide sequence ID" value="NZ_SSZK01000001.1"/>
</dbReference>
<dbReference type="SMR" id="P77148"/>
<dbReference type="BioGRID" id="4260262">
    <property type="interactions" value="23"/>
</dbReference>
<dbReference type="FunCoup" id="P77148">
    <property type="interactions" value="4"/>
</dbReference>
<dbReference type="IntAct" id="P77148">
    <property type="interactions" value="1"/>
</dbReference>
<dbReference type="STRING" id="511145.b1668"/>
<dbReference type="jPOST" id="P77148"/>
<dbReference type="PaxDb" id="511145-b1668"/>
<dbReference type="EnsemblBacteria" id="AAC74738">
    <property type="protein sequence ID" value="AAC74738"/>
    <property type="gene ID" value="b1668"/>
</dbReference>
<dbReference type="GeneID" id="945786"/>
<dbReference type="KEGG" id="ecj:JW1658"/>
<dbReference type="KEGG" id="eco:b1668"/>
<dbReference type="KEGG" id="ecoc:C3026_09565"/>
<dbReference type="PATRIC" id="fig|511145.12.peg.1739"/>
<dbReference type="EchoBASE" id="EB3711"/>
<dbReference type="eggNOG" id="COG4529">
    <property type="taxonomic scope" value="Bacteria"/>
</dbReference>
<dbReference type="HOGENOM" id="CLU_031619_1_0_6"/>
<dbReference type="InParanoid" id="P77148"/>
<dbReference type="OMA" id="LMHDRPF"/>
<dbReference type="OrthoDB" id="6309046at2"/>
<dbReference type="BioCyc" id="EcoCyc:G6896-MONOMER"/>
<dbReference type="PRO" id="PR:P77148"/>
<dbReference type="Proteomes" id="UP000000625">
    <property type="component" value="Chromosome"/>
</dbReference>
<dbReference type="Gene3D" id="3.50.50.60">
    <property type="entry name" value="FAD/NAD(P)-binding domain"/>
    <property type="match status" value="1"/>
</dbReference>
<dbReference type="InterPro" id="IPR036188">
    <property type="entry name" value="FAD/NAD-bd_sf"/>
</dbReference>
<dbReference type="InterPro" id="IPR038732">
    <property type="entry name" value="HpyO/CreE_NAD-binding"/>
</dbReference>
<dbReference type="InterPro" id="IPR052189">
    <property type="entry name" value="L-asp_N-monooxygenase_NS-form"/>
</dbReference>
<dbReference type="NCBIfam" id="NF007381">
    <property type="entry name" value="PRK09897.1"/>
    <property type="match status" value="1"/>
</dbReference>
<dbReference type="PANTHER" id="PTHR40254">
    <property type="entry name" value="BLR0577 PROTEIN"/>
    <property type="match status" value="1"/>
</dbReference>
<dbReference type="PANTHER" id="PTHR40254:SF1">
    <property type="entry name" value="BLR0577 PROTEIN"/>
    <property type="match status" value="1"/>
</dbReference>
<dbReference type="Pfam" id="PF13454">
    <property type="entry name" value="NAD_binding_9"/>
    <property type="match status" value="1"/>
</dbReference>
<dbReference type="SUPFAM" id="SSF51905">
    <property type="entry name" value="FAD/NAD(P)-binding domain"/>
    <property type="match status" value="1"/>
</dbReference>
<gene>
    <name type="primary">ydhS</name>
    <name type="ordered locus">b1668</name>
    <name type="ordered locus">JW1658</name>
</gene>
<name>YDHS_ECOLI</name>
<protein>
    <recommendedName>
        <fullName>Uncharacterized protein YdhS</fullName>
    </recommendedName>
</protein>
<sequence>MKKIAIVGAGPTGIYTLFSLLQQQTPLSISIFEQADEAGVGMPYSDEENSKMMLANIASIEIPPIYCTYLEWLQKQEDSHLQRYGVKKETLHDRQFLPRILLGEYFRDQFLRLVDQARQQKFAVAVYESCQVTDLQITNAGVMLATNQDLPSETFDLAVIATGHVWPDEEEATRTYFPSPWSGLMEAKVDACNVGIMGTSLSGLDAAMAVAIQHGSFIEDDKQHVVFHRDNASEKLNITLLSRTGILPEADFYCPIPYEPLHIVTDQALNAEIQKGEEGLLDRVFRLIVEEIKFADPDWSQRIALESLNVDSFAQAWFAERKQRDPFDWAEKNLQEVERNKREKHTVPWRYVILRLHEAVQEIVPHLNEHDHKRFSKGLARVFIDNYAAIPSESIRRLLALREAGIIHILALGEDYKMEINESRTVLKTEDNSYSFDVFIDARGQRPLKVKDIPFPGLREQLQKTGDEIPDVGEDYTLQQPEDIRGRVAFGALPWLMHDQPFVQGLTACAEIGEAMARAVVKPASRARRRLSFD</sequence>
<reference key="1">
    <citation type="journal article" date="1997" name="J. Bacteriol.">
        <title>Analysis of the boundaries of Salmonella pathogenicity island 2 and the corresponding chromosomal region of Escherichia coli K-12.</title>
        <authorList>
            <person name="Hensel M."/>
            <person name="Shea J.E."/>
            <person name="Baeumler A.J."/>
            <person name="Gleeson C."/>
            <person name="Blattner F.R."/>
            <person name="Holden D.W."/>
        </authorList>
    </citation>
    <scope>NUCLEOTIDE SEQUENCE [GENOMIC DNA]</scope>
    <source>
        <strain>K12 / MG1655 / ATCC 47076</strain>
    </source>
</reference>
<reference key="2">
    <citation type="journal article" date="1997" name="Science">
        <title>The complete genome sequence of Escherichia coli K-12.</title>
        <authorList>
            <person name="Blattner F.R."/>
            <person name="Plunkett G. III"/>
            <person name="Bloch C.A."/>
            <person name="Perna N.T."/>
            <person name="Burland V."/>
            <person name="Riley M."/>
            <person name="Collado-Vides J."/>
            <person name="Glasner J.D."/>
            <person name="Rode C.K."/>
            <person name="Mayhew G.F."/>
            <person name="Gregor J."/>
            <person name="Davis N.W."/>
            <person name="Kirkpatrick H.A."/>
            <person name="Goeden M.A."/>
            <person name="Rose D.J."/>
            <person name="Mau B."/>
            <person name="Shao Y."/>
        </authorList>
    </citation>
    <scope>NUCLEOTIDE SEQUENCE [LARGE SCALE GENOMIC DNA]</scope>
    <source>
        <strain>K12 / MG1655 / ATCC 47076</strain>
    </source>
</reference>
<reference key="3">
    <citation type="journal article" date="2006" name="Mol. Syst. Biol.">
        <title>Highly accurate genome sequences of Escherichia coli K-12 strains MG1655 and W3110.</title>
        <authorList>
            <person name="Hayashi K."/>
            <person name="Morooka N."/>
            <person name="Yamamoto Y."/>
            <person name="Fujita K."/>
            <person name="Isono K."/>
            <person name="Choi S."/>
            <person name="Ohtsubo E."/>
            <person name="Baba T."/>
            <person name="Wanner B.L."/>
            <person name="Mori H."/>
            <person name="Horiuchi T."/>
        </authorList>
    </citation>
    <scope>NUCLEOTIDE SEQUENCE [LARGE SCALE GENOMIC DNA]</scope>
    <source>
        <strain>K12 / W3110 / ATCC 27325 / DSM 5911</strain>
    </source>
</reference>
<accession>P77148</accession>
<accession>Q2MB60</accession>
<feature type="chain" id="PRO_0000168978" description="Uncharacterized protein YdhS">
    <location>
        <begin position="1"/>
        <end position="534"/>
    </location>
</feature>
<organism>
    <name type="scientific">Escherichia coli (strain K12)</name>
    <dbReference type="NCBI Taxonomy" id="83333"/>
    <lineage>
        <taxon>Bacteria</taxon>
        <taxon>Pseudomonadati</taxon>
        <taxon>Pseudomonadota</taxon>
        <taxon>Gammaproteobacteria</taxon>
        <taxon>Enterobacterales</taxon>
        <taxon>Enterobacteriaceae</taxon>
        <taxon>Escherichia</taxon>
    </lineage>
</organism>
<proteinExistence type="predicted"/>